<sequence length="803" mass="86480">MGVGLCGRGIVAKPRLYEVASDLGTDSKTLMGILREMGEFVKSPSSALEPPVVRKLAKAFAEKYPDKVEEKKEHTPPAPVVETPKAPPPLPRPIIRHAVRGVPSGAPRPGNNPYAPRQGMGQLATPGPATKRPVKFKAEGDKKPASTHRRVPAPLPQKRTPLRGRGAPGAFGRGNKPKSRKSKTLKRQEFEMRDAPVIGGVTIPRGDGRVIRLMQGASVTDFAEKIDVLPANLLSVLFHLGEMATATESLDEATFEILAEEIGYKVQIVSPDDEDRALLESFSVNLAAEHAEDSELDLAIRPPVVTIMGHVDHGKTLLLDTIRNTNTLAEESGGITQHIGAYQVSVGDRFVTFIDTPGHEAFTAMRARGAKVTDIAVLVVAADDGIMPQTIEALDHARSADVPIVVAVNKIDKEGANPAKIRQQMTEFDVIPEEYGGDVMFIDISAKTGQGVDALLEAILLTADAALELRANPDRTARGVTIEAKLDAGRGAVATVLVQSGTLRVGDRVVTGCAYGRVRAMVDENGLPVESAPPSRPVRVQGLSSVPKAGDSFIVVAEDRQARQIAEKREANERNAQLAKSRKRVSLEDFTRAIQEGRVQSLNMIIKGDVSGAVEALEESLSKLDVGEEVSLRIIHRGVGAITESDVNLATVDNAVVIGFNVRPDRKARDRAAREGVDVRFYSVIYDAIEDIEKSLKGLLKPELEERKLGLAIVKEVFHSSRVGTIAGCSVESGSITRNAKARLIRDGVVVVNDLTVTSLRRFKDDVTEVKSGFECGVGLGSCDDIRIGDEIETIQIVEKPRA</sequence>
<organism>
    <name type="scientific">Tropheryma whipplei (strain Twist)</name>
    <name type="common">Whipple's bacillus</name>
    <dbReference type="NCBI Taxonomy" id="203267"/>
    <lineage>
        <taxon>Bacteria</taxon>
        <taxon>Bacillati</taxon>
        <taxon>Actinomycetota</taxon>
        <taxon>Actinomycetes</taxon>
        <taxon>Micrococcales</taxon>
        <taxon>Tropherymataceae</taxon>
        <taxon>Tropheryma</taxon>
    </lineage>
</organism>
<protein>
    <recommendedName>
        <fullName evidence="2">Translation initiation factor IF-2</fullName>
    </recommendedName>
</protein>
<gene>
    <name evidence="2" type="primary">infB</name>
    <name type="ordered locus">TWT_157</name>
</gene>
<accession>Q83GT8</accession>
<dbReference type="EMBL" id="AE014184">
    <property type="protein sequence ID" value="AAO44254.1"/>
    <property type="molecule type" value="Genomic_DNA"/>
</dbReference>
<dbReference type="SMR" id="Q83GT8"/>
<dbReference type="STRING" id="203267.TWT_157"/>
<dbReference type="KEGG" id="twh:TWT_157"/>
<dbReference type="eggNOG" id="COG0532">
    <property type="taxonomic scope" value="Bacteria"/>
</dbReference>
<dbReference type="HOGENOM" id="CLU_006301_9_1_11"/>
<dbReference type="OrthoDB" id="9811804at2"/>
<dbReference type="Proteomes" id="UP000002200">
    <property type="component" value="Chromosome"/>
</dbReference>
<dbReference type="GO" id="GO:0005829">
    <property type="term" value="C:cytosol"/>
    <property type="evidence" value="ECO:0007669"/>
    <property type="project" value="TreeGrafter"/>
</dbReference>
<dbReference type="GO" id="GO:0005525">
    <property type="term" value="F:GTP binding"/>
    <property type="evidence" value="ECO:0007669"/>
    <property type="project" value="UniProtKB-KW"/>
</dbReference>
<dbReference type="GO" id="GO:0003924">
    <property type="term" value="F:GTPase activity"/>
    <property type="evidence" value="ECO:0007669"/>
    <property type="project" value="UniProtKB-UniRule"/>
</dbReference>
<dbReference type="GO" id="GO:0003743">
    <property type="term" value="F:translation initiation factor activity"/>
    <property type="evidence" value="ECO:0007669"/>
    <property type="project" value="UniProtKB-UniRule"/>
</dbReference>
<dbReference type="CDD" id="cd01887">
    <property type="entry name" value="IF2_eIF5B"/>
    <property type="match status" value="1"/>
</dbReference>
<dbReference type="CDD" id="cd03702">
    <property type="entry name" value="IF2_mtIF2_II"/>
    <property type="match status" value="1"/>
</dbReference>
<dbReference type="CDD" id="cd03692">
    <property type="entry name" value="mtIF2_IVc"/>
    <property type="match status" value="1"/>
</dbReference>
<dbReference type="FunFam" id="2.40.30.10:FF:000007">
    <property type="entry name" value="Translation initiation factor IF-2"/>
    <property type="match status" value="1"/>
</dbReference>
<dbReference type="FunFam" id="2.40.30.10:FF:000008">
    <property type="entry name" value="Translation initiation factor IF-2"/>
    <property type="match status" value="1"/>
</dbReference>
<dbReference type="FunFam" id="3.40.50.10050:FF:000001">
    <property type="entry name" value="Translation initiation factor IF-2"/>
    <property type="match status" value="1"/>
</dbReference>
<dbReference type="FunFam" id="3.40.50.300:FF:000019">
    <property type="entry name" value="Translation initiation factor IF-2"/>
    <property type="match status" value="1"/>
</dbReference>
<dbReference type="Gene3D" id="1.10.10.2480">
    <property type="match status" value="1"/>
</dbReference>
<dbReference type="Gene3D" id="3.40.50.300">
    <property type="entry name" value="P-loop containing nucleotide triphosphate hydrolases"/>
    <property type="match status" value="1"/>
</dbReference>
<dbReference type="Gene3D" id="2.40.30.10">
    <property type="entry name" value="Translation factors"/>
    <property type="match status" value="2"/>
</dbReference>
<dbReference type="Gene3D" id="3.40.50.10050">
    <property type="entry name" value="Translation initiation factor IF- 2, domain 3"/>
    <property type="match status" value="1"/>
</dbReference>
<dbReference type="HAMAP" id="MF_00100_B">
    <property type="entry name" value="IF_2_B"/>
    <property type="match status" value="1"/>
</dbReference>
<dbReference type="InterPro" id="IPR053905">
    <property type="entry name" value="EF-G-like_DII"/>
</dbReference>
<dbReference type="InterPro" id="IPR004161">
    <property type="entry name" value="EFTu-like_2"/>
</dbReference>
<dbReference type="InterPro" id="IPR044145">
    <property type="entry name" value="IF2_II"/>
</dbReference>
<dbReference type="InterPro" id="IPR006847">
    <property type="entry name" value="IF2_N"/>
</dbReference>
<dbReference type="InterPro" id="IPR027417">
    <property type="entry name" value="P-loop_NTPase"/>
</dbReference>
<dbReference type="InterPro" id="IPR005225">
    <property type="entry name" value="Small_GTP-bd"/>
</dbReference>
<dbReference type="InterPro" id="IPR000795">
    <property type="entry name" value="T_Tr_GTP-bd_dom"/>
</dbReference>
<dbReference type="InterPro" id="IPR000178">
    <property type="entry name" value="TF_IF2_bacterial-like"/>
</dbReference>
<dbReference type="InterPro" id="IPR015760">
    <property type="entry name" value="TIF_IF2"/>
</dbReference>
<dbReference type="InterPro" id="IPR023115">
    <property type="entry name" value="TIF_IF2_dom3"/>
</dbReference>
<dbReference type="InterPro" id="IPR036925">
    <property type="entry name" value="TIF_IF2_dom3_sf"/>
</dbReference>
<dbReference type="InterPro" id="IPR009000">
    <property type="entry name" value="Transl_B-barrel_sf"/>
</dbReference>
<dbReference type="NCBIfam" id="TIGR00487">
    <property type="entry name" value="IF-2"/>
    <property type="match status" value="1"/>
</dbReference>
<dbReference type="NCBIfam" id="TIGR00231">
    <property type="entry name" value="small_GTP"/>
    <property type="match status" value="1"/>
</dbReference>
<dbReference type="PANTHER" id="PTHR43381:SF5">
    <property type="entry name" value="TR-TYPE G DOMAIN-CONTAINING PROTEIN"/>
    <property type="match status" value="1"/>
</dbReference>
<dbReference type="PANTHER" id="PTHR43381">
    <property type="entry name" value="TRANSLATION INITIATION FACTOR IF-2-RELATED"/>
    <property type="match status" value="1"/>
</dbReference>
<dbReference type="Pfam" id="PF22042">
    <property type="entry name" value="EF-G_D2"/>
    <property type="match status" value="1"/>
</dbReference>
<dbReference type="Pfam" id="PF00009">
    <property type="entry name" value="GTP_EFTU"/>
    <property type="match status" value="1"/>
</dbReference>
<dbReference type="Pfam" id="PF03144">
    <property type="entry name" value="GTP_EFTU_D2"/>
    <property type="match status" value="1"/>
</dbReference>
<dbReference type="Pfam" id="PF11987">
    <property type="entry name" value="IF-2"/>
    <property type="match status" value="1"/>
</dbReference>
<dbReference type="Pfam" id="PF04760">
    <property type="entry name" value="IF2_N"/>
    <property type="match status" value="2"/>
</dbReference>
<dbReference type="SUPFAM" id="SSF52156">
    <property type="entry name" value="Initiation factor IF2/eIF5b, domain 3"/>
    <property type="match status" value="1"/>
</dbReference>
<dbReference type="SUPFAM" id="SSF52540">
    <property type="entry name" value="P-loop containing nucleoside triphosphate hydrolases"/>
    <property type="match status" value="1"/>
</dbReference>
<dbReference type="SUPFAM" id="SSF50447">
    <property type="entry name" value="Translation proteins"/>
    <property type="match status" value="2"/>
</dbReference>
<dbReference type="PROSITE" id="PS51722">
    <property type="entry name" value="G_TR_2"/>
    <property type="match status" value="1"/>
</dbReference>
<dbReference type="PROSITE" id="PS01176">
    <property type="entry name" value="IF2"/>
    <property type="match status" value="1"/>
</dbReference>
<comment type="function">
    <text evidence="2">One of the essential components for the initiation of protein synthesis. Protects formylmethionyl-tRNA from spontaneous hydrolysis and promotes its binding to the 30S ribosomal subunits. Also involved in the hydrolysis of GTP during the formation of the 70S ribosomal complex.</text>
</comment>
<comment type="subcellular location">
    <subcellularLocation>
        <location evidence="2">Cytoplasm</location>
    </subcellularLocation>
</comment>
<comment type="similarity">
    <text evidence="2">Belongs to the TRAFAC class translation factor GTPase superfamily. Classic translation factor GTPase family. IF-2 subfamily.</text>
</comment>
<name>IF2_TROWT</name>
<feature type="chain" id="PRO_0000137277" description="Translation initiation factor IF-2">
    <location>
        <begin position="1"/>
        <end position="803"/>
    </location>
</feature>
<feature type="domain" description="tr-type G">
    <location>
        <begin position="300"/>
        <end position="468"/>
    </location>
</feature>
<feature type="region of interest" description="Disordered" evidence="3">
    <location>
        <begin position="65"/>
        <end position="186"/>
    </location>
</feature>
<feature type="region of interest" description="G1" evidence="1">
    <location>
        <begin position="309"/>
        <end position="316"/>
    </location>
</feature>
<feature type="region of interest" description="G2" evidence="1">
    <location>
        <begin position="334"/>
        <end position="338"/>
    </location>
</feature>
<feature type="region of interest" description="G3" evidence="1">
    <location>
        <begin position="355"/>
        <end position="358"/>
    </location>
</feature>
<feature type="region of interest" description="G4" evidence="1">
    <location>
        <begin position="409"/>
        <end position="412"/>
    </location>
</feature>
<feature type="region of interest" description="G5" evidence="1">
    <location>
        <begin position="445"/>
        <end position="447"/>
    </location>
</feature>
<feature type="compositionally biased region" description="Basic and acidic residues" evidence="3">
    <location>
        <begin position="65"/>
        <end position="75"/>
    </location>
</feature>
<feature type="compositionally biased region" description="Basic residues" evidence="3">
    <location>
        <begin position="175"/>
        <end position="185"/>
    </location>
</feature>
<feature type="binding site" evidence="2">
    <location>
        <begin position="309"/>
        <end position="316"/>
    </location>
    <ligand>
        <name>GTP</name>
        <dbReference type="ChEBI" id="CHEBI:37565"/>
    </ligand>
</feature>
<feature type="binding site" evidence="2">
    <location>
        <begin position="355"/>
        <end position="359"/>
    </location>
    <ligand>
        <name>GTP</name>
        <dbReference type="ChEBI" id="CHEBI:37565"/>
    </ligand>
</feature>
<feature type="binding site" evidence="2">
    <location>
        <begin position="409"/>
        <end position="412"/>
    </location>
    <ligand>
        <name>GTP</name>
        <dbReference type="ChEBI" id="CHEBI:37565"/>
    </ligand>
</feature>
<reference key="1">
    <citation type="journal article" date="2003" name="Genome Res.">
        <title>Tropheryma whipplei twist: a human pathogenic Actinobacteria with a reduced genome.</title>
        <authorList>
            <person name="Raoult D."/>
            <person name="Ogata H."/>
            <person name="Audic S."/>
            <person name="Robert C."/>
            <person name="Suhre K."/>
            <person name="Drancourt M."/>
            <person name="Claverie J.-M."/>
        </authorList>
    </citation>
    <scope>NUCLEOTIDE SEQUENCE [LARGE SCALE GENOMIC DNA]</scope>
    <source>
        <strain>Twist</strain>
    </source>
</reference>
<proteinExistence type="inferred from homology"/>
<evidence type="ECO:0000250" key="1"/>
<evidence type="ECO:0000255" key="2">
    <source>
        <dbReference type="HAMAP-Rule" id="MF_00100"/>
    </source>
</evidence>
<evidence type="ECO:0000256" key="3">
    <source>
        <dbReference type="SAM" id="MobiDB-lite"/>
    </source>
</evidence>
<keyword id="KW-0963">Cytoplasm</keyword>
<keyword id="KW-0342">GTP-binding</keyword>
<keyword id="KW-0396">Initiation factor</keyword>
<keyword id="KW-0547">Nucleotide-binding</keyword>
<keyword id="KW-0648">Protein biosynthesis</keyword>
<keyword id="KW-1185">Reference proteome</keyword>